<proteinExistence type="inferred from homology"/>
<protein>
    <recommendedName>
        <fullName>Aerobic glycerol-3-phosphate dehydrogenase</fullName>
        <ecNumber>1.1.5.3</ecNumber>
    </recommendedName>
</protein>
<sequence>MALSTFKREHIKKNLRNDEYDLVIIGGGITGAGIALDASERGMKVALVEMQDFAQGTSSRSTKLVHGGLRYLKQFQIGVVAETGKERAIVYENGPHVTTPEWMLLPMHKGGTFGKFSTSIGLGMYDRLAGVKKSERKKMLSKKETLAKEPLVKKEGLKGGGYYVEYRTDDARLTIEVMKRAAEKGAEIINYTKSEHFTYDKNQQVNGVKVIDKLTNENYTIKAKKVVNAAGPWVDDVRSGDYARNNKKLRLTKGVHVVIDQSKFPLGQAVYFDTEKDGRMIFAIPREGKAYVGTTDTFYDNIKSSPLTTQEDRDYLIDAINYMFPSVNVTDEDIESTWAGIRPLIYEEGKDPSEISRKDEIWEGKSGLLTIAGGKLTGYRHMAQDIVDLVSKRLKKDYGLTFSPCNTKGLAISGGDVGGSKNFDAFVEQKVDVAKGFGIDEDVARRLASKYGSNVDELFNIAQTSQYHDSKLPLEIYVELVYSIQQEMVYKPNDFLVRRSGKMYFNIKDVLDYKDAVIDIMADMLDYSPAQIEAYTEEVEQAIKEAQHGNNQPAVKE</sequence>
<comment type="catalytic activity">
    <reaction>
        <text>a quinone + sn-glycerol 3-phosphate = dihydroxyacetone phosphate + a quinol</text>
        <dbReference type="Rhea" id="RHEA:18977"/>
        <dbReference type="ChEBI" id="CHEBI:24646"/>
        <dbReference type="ChEBI" id="CHEBI:57597"/>
        <dbReference type="ChEBI" id="CHEBI:57642"/>
        <dbReference type="ChEBI" id="CHEBI:132124"/>
        <dbReference type="EC" id="1.1.5.3"/>
    </reaction>
</comment>
<comment type="cofactor">
    <cofactor evidence="1">
        <name>FAD</name>
        <dbReference type="ChEBI" id="CHEBI:57692"/>
    </cofactor>
</comment>
<comment type="pathway">
    <text>Polyol metabolism; glycerol degradation via glycerol kinase pathway; glycerone phosphate from sn-glycerol 3-phosphate (aerobic route): step 1/1.</text>
</comment>
<comment type="subcellular location">
    <subcellularLocation>
        <location evidence="1">Cytoplasm</location>
    </subcellularLocation>
</comment>
<comment type="similarity">
    <text evidence="3">Belongs to the FAD-dependent glycerol-3-phosphate dehydrogenase family.</text>
</comment>
<comment type="sequence caution" evidence="3">
    <conflict type="erroneous initiation">
        <sequence resource="EMBL-CDS" id="BAB57464"/>
    </conflict>
</comment>
<organism>
    <name type="scientific">Staphylococcus aureus (strain Mu50 / ATCC 700699)</name>
    <dbReference type="NCBI Taxonomy" id="158878"/>
    <lineage>
        <taxon>Bacteria</taxon>
        <taxon>Bacillati</taxon>
        <taxon>Bacillota</taxon>
        <taxon>Bacilli</taxon>
        <taxon>Bacillales</taxon>
        <taxon>Staphylococcaceae</taxon>
        <taxon>Staphylococcus</taxon>
    </lineage>
</organism>
<accession>Q99UH2</accession>
<reference key="1">
    <citation type="journal article" date="2001" name="Lancet">
        <title>Whole genome sequencing of meticillin-resistant Staphylococcus aureus.</title>
        <authorList>
            <person name="Kuroda M."/>
            <person name="Ohta T."/>
            <person name="Uchiyama I."/>
            <person name="Baba T."/>
            <person name="Yuzawa H."/>
            <person name="Kobayashi I."/>
            <person name="Cui L."/>
            <person name="Oguchi A."/>
            <person name="Aoki K."/>
            <person name="Nagai Y."/>
            <person name="Lian J.-Q."/>
            <person name="Ito T."/>
            <person name="Kanamori M."/>
            <person name="Matsumaru H."/>
            <person name="Maruyama A."/>
            <person name="Murakami H."/>
            <person name="Hosoyama A."/>
            <person name="Mizutani-Ui Y."/>
            <person name="Takahashi N.K."/>
            <person name="Sawano T."/>
            <person name="Inoue R."/>
            <person name="Kaito C."/>
            <person name="Sekimizu K."/>
            <person name="Hirakawa H."/>
            <person name="Kuhara S."/>
            <person name="Goto S."/>
            <person name="Yabuzaki J."/>
            <person name="Kanehisa M."/>
            <person name="Yamashita A."/>
            <person name="Oshima K."/>
            <person name="Furuya K."/>
            <person name="Yoshino C."/>
            <person name="Shiba T."/>
            <person name="Hattori M."/>
            <person name="Ogasawara N."/>
            <person name="Hayashi H."/>
            <person name="Hiramatsu K."/>
        </authorList>
    </citation>
    <scope>NUCLEOTIDE SEQUENCE [LARGE SCALE GENOMIC DNA]</scope>
    <source>
        <strain>Mu50 / ATCC 700699</strain>
    </source>
</reference>
<keyword id="KW-0963">Cytoplasm</keyword>
<keyword id="KW-0274">FAD</keyword>
<keyword id="KW-0285">Flavoprotein</keyword>
<keyword id="KW-0319">Glycerol metabolism</keyword>
<keyword id="KW-0560">Oxidoreductase</keyword>
<name>GLPD_STAAM</name>
<evidence type="ECO:0000250" key="1"/>
<evidence type="ECO:0000255" key="2"/>
<evidence type="ECO:0000305" key="3"/>
<feature type="chain" id="PRO_0000270060" description="Aerobic glycerol-3-phosphate dehydrogenase">
    <location>
        <begin position="1"/>
        <end position="557"/>
    </location>
</feature>
<feature type="binding site" evidence="2">
    <location>
        <begin position="21"/>
        <end position="49"/>
    </location>
    <ligand>
        <name>FAD</name>
        <dbReference type="ChEBI" id="CHEBI:57692"/>
    </ligand>
</feature>
<dbReference type="EC" id="1.1.5.3"/>
<dbReference type="EMBL" id="BA000017">
    <property type="protein sequence ID" value="BAB57464.1"/>
    <property type="status" value="ALT_INIT"/>
    <property type="molecule type" value="Genomic_DNA"/>
</dbReference>
<dbReference type="RefSeq" id="WP_001218596.1">
    <property type="nucleotide sequence ID" value="NC_002758.2"/>
</dbReference>
<dbReference type="SMR" id="Q99UH2"/>
<dbReference type="KEGG" id="sav:SAV1302"/>
<dbReference type="HOGENOM" id="CLU_015740_5_2_9"/>
<dbReference type="UniPathway" id="UPA00618">
    <property type="reaction ID" value="UER00674"/>
</dbReference>
<dbReference type="Proteomes" id="UP000002481">
    <property type="component" value="Chromosome"/>
</dbReference>
<dbReference type="GO" id="GO:0005737">
    <property type="term" value="C:cytoplasm"/>
    <property type="evidence" value="ECO:0007669"/>
    <property type="project" value="UniProtKB-SubCell"/>
</dbReference>
<dbReference type="GO" id="GO:0004368">
    <property type="term" value="F:glycerol-3-phosphate dehydrogenase (quinone) activity"/>
    <property type="evidence" value="ECO:0007669"/>
    <property type="project" value="UniProtKB-EC"/>
</dbReference>
<dbReference type="GO" id="GO:0019563">
    <property type="term" value="P:glycerol catabolic process"/>
    <property type="evidence" value="ECO:0007669"/>
    <property type="project" value="UniProtKB-UniPathway"/>
</dbReference>
<dbReference type="GO" id="GO:0046168">
    <property type="term" value="P:glycerol-3-phosphate catabolic process"/>
    <property type="evidence" value="ECO:0007669"/>
    <property type="project" value="TreeGrafter"/>
</dbReference>
<dbReference type="Gene3D" id="1.10.8.870">
    <property type="entry name" value="Alpha-glycerophosphate oxidase, cap domain"/>
    <property type="match status" value="1"/>
</dbReference>
<dbReference type="Gene3D" id="3.30.9.10">
    <property type="entry name" value="D-Amino Acid Oxidase, subunit A, domain 2"/>
    <property type="match status" value="1"/>
</dbReference>
<dbReference type="Gene3D" id="3.50.50.60">
    <property type="entry name" value="FAD/NAD(P)-binding domain"/>
    <property type="match status" value="1"/>
</dbReference>
<dbReference type="InterPro" id="IPR031656">
    <property type="entry name" value="DAO_C"/>
</dbReference>
<dbReference type="InterPro" id="IPR038299">
    <property type="entry name" value="DAO_C_sf"/>
</dbReference>
<dbReference type="InterPro" id="IPR006076">
    <property type="entry name" value="FAD-dep_OxRdtase"/>
</dbReference>
<dbReference type="InterPro" id="IPR036188">
    <property type="entry name" value="FAD/NAD-bd_sf"/>
</dbReference>
<dbReference type="InterPro" id="IPR000447">
    <property type="entry name" value="G3P_DH_FAD-dep"/>
</dbReference>
<dbReference type="PANTHER" id="PTHR11985:SF35">
    <property type="entry name" value="ANAEROBIC GLYCEROL-3-PHOSPHATE DEHYDROGENASE SUBUNIT A"/>
    <property type="match status" value="1"/>
</dbReference>
<dbReference type="PANTHER" id="PTHR11985">
    <property type="entry name" value="GLYCEROL-3-PHOSPHATE DEHYDROGENASE"/>
    <property type="match status" value="1"/>
</dbReference>
<dbReference type="Pfam" id="PF01266">
    <property type="entry name" value="DAO"/>
    <property type="match status" value="1"/>
</dbReference>
<dbReference type="Pfam" id="PF16901">
    <property type="entry name" value="DAO_C"/>
    <property type="match status" value="1"/>
</dbReference>
<dbReference type="PRINTS" id="PR01001">
    <property type="entry name" value="FADG3PDH"/>
</dbReference>
<dbReference type="SUPFAM" id="SSF54373">
    <property type="entry name" value="FAD-linked reductases, C-terminal domain"/>
    <property type="match status" value="1"/>
</dbReference>
<dbReference type="SUPFAM" id="SSF51905">
    <property type="entry name" value="FAD/NAD(P)-binding domain"/>
    <property type="match status" value="1"/>
</dbReference>
<dbReference type="PROSITE" id="PS00977">
    <property type="entry name" value="FAD_G3PDH_1"/>
    <property type="match status" value="1"/>
</dbReference>
<dbReference type="PROSITE" id="PS00978">
    <property type="entry name" value="FAD_G3PDH_2"/>
    <property type="match status" value="1"/>
</dbReference>
<gene>
    <name type="primary">glpD</name>
    <name type="ordered locus">SAV1302</name>
</gene>